<protein>
    <recommendedName>
        <fullName evidence="1">2-C-methyl-D-erythritol 2,4-cyclodiphosphate synthase</fullName>
        <shortName evidence="1">MECDP-synthase</shortName>
        <shortName evidence="1">MECPP-synthase</shortName>
        <shortName evidence="1">MECPS</shortName>
        <ecNumber evidence="1">4.6.1.12</ecNumber>
    </recommendedName>
</protein>
<gene>
    <name evidence="1" type="primary">ispF</name>
    <name type="ordered locus">CD630_00480</name>
</gene>
<dbReference type="EC" id="4.6.1.12" evidence="1"/>
<dbReference type="EMBL" id="AM180355">
    <property type="protein sequence ID" value="CAJ66862.1"/>
    <property type="molecule type" value="Genomic_DNA"/>
</dbReference>
<dbReference type="RefSeq" id="WP_003425513.1">
    <property type="nucleotide sequence ID" value="NZ_JAUPES010000031.1"/>
</dbReference>
<dbReference type="RefSeq" id="YP_001086511.1">
    <property type="nucleotide sequence ID" value="NC_009089.1"/>
</dbReference>
<dbReference type="SMR" id="Q18CD3"/>
<dbReference type="STRING" id="272563.CD630_00480"/>
<dbReference type="EnsemblBacteria" id="CAJ66862">
    <property type="protein sequence ID" value="CAJ66862"/>
    <property type="gene ID" value="CD630_00480"/>
</dbReference>
<dbReference type="GeneID" id="66352544"/>
<dbReference type="KEGG" id="cdf:CD630_00480"/>
<dbReference type="KEGG" id="pdc:CDIF630_00110"/>
<dbReference type="PATRIC" id="fig|272563.120.peg.52"/>
<dbReference type="eggNOG" id="COG0245">
    <property type="taxonomic scope" value="Bacteria"/>
</dbReference>
<dbReference type="OrthoDB" id="9804336at2"/>
<dbReference type="PhylomeDB" id="Q18CD3"/>
<dbReference type="BioCyc" id="PDIF272563:G12WB-100-MONOMER"/>
<dbReference type="UniPathway" id="UPA00056">
    <property type="reaction ID" value="UER00095"/>
</dbReference>
<dbReference type="Proteomes" id="UP000001978">
    <property type="component" value="Chromosome"/>
</dbReference>
<dbReference type="GO" id="GO:0008685">
    <property type="term" value="F:2-C-methyl-D-erythritol 2,4-cyclodiphosphate synthase activity"/>
    <property type="evidence" value="ECO:0007669"/>
    <property type="project" value="UniProtKB-UniRule"/>
</dbReference>
<dbReference type="GO" id="GO:0046872">
    <property type="term" value="F:metal ion binding"/>
    <property type="evidence" value="ECO:0007669"/>
    <property type="project" value="UniProtKB-KW"/>
</dbReference>
<dbReference type="GO" id="GO:0019288">
    <property type="term" value="P:isopentenyl diphosphate biosynthetic process, methylerythritol 4-phosphate pathway"/>
    <property type="evidence" value="ECO:0007669"/>
    <property type="project" value="UniProtKB-UniRule"/>
</dbReference>
<dbReference type="GO" id="GO:0016114">
    <property type="term" value="P:terpenoid biosynthetic process"/>
    <property type="evidence" value="ECO:0007669"/>
    <property type="project" value="InterPro"/>
</dbReference>
<dbReference type="CDD" id="cd00554">
    <property type="entry name" value="MECDP_synthase"/>
    <property type="match status" value="1"/>
</dbReference>
<dbReference type="FunFam" id="3.30.1330.50:FF:000001">
    <property type="entry name" value="2-C-methyl-D-erythritol 2,4-cyclodiphosphate synthase"/>
    <property type="match status" value="1"/>
</dbReference>
<dbReference type="Gene3D" id="3.30.1330.50">
    <property type="entry name" value="2-C-methyl-D-erythritol 2,4-cyclodiphosphate synthase"/>
    <property type="match status" value="1"/>
</dbReference>
<dbReference type="HAMAP" id="MF_00107">
    <property type="entry name" value="IspF"/>
    <property type="match status" value="1"/>
</dbReference>
<dbReference type="InterPro" id="IPR003526">
    <property type="entry name" value="MECDP_synthase"/>
</dbReference>
<dbReference type="InterPro" id="IPR020555">
    <property type="entry name" value="MECDP_synthase_CS"/>
</dbReference>
<dbReference type="InterPro" id="IPR036571">
    <property type="entry name" value="MECDP_synthase_sf"/>
</dbReference>
<dbReference type="NCBIfam" id="TIGR00151">
    <property type="entry name" value="ispF"/>
    <property type="match status" value="1"/>
</dbReference>
<dbReference type="PANTHER" id="PTHR43181">
    <property type="entry name" value="2-C-METHYL-D-ERYTHRITOL 2,4-CYCLODIPHOSPHATE SYNTHASE, CHLOROPLASTIC"/>
    <property type="match status" value="1"/>
</dbReference>
<dbReference type="PANTHER" id="PTHR43181:SF1">
    <property type="entry name" value="2-C-METHYL-D-ERYTHRITOL 2,4-CYCLODIPHOSPHATE SYNTHASE, CHLOROPLASTIC"/>
    <property type="match status" value="1"/>
</dbReference>
<dbReference type="Pfam" id="PF02542">
    <property type="entry name" value="YgbB"/>
    <property type="match status" value="1"/>
</dbReference>
<dbReference type="SUPFAM" id="SSF69765">
    <property type="entry name" value="IpsF-like"/>
    <property type="match status" value="1"/>
</dbReference>
<dbReference type="PROSITE" id="PS01350">
    <property type="entry name" value="ISPF"/>
    <property type="match status" value="1"/>
</dbReference>
<name>ISPF_CLOD6</name>
<feature type="chain" id="PRO_1000022826" description="2-C-methyl-D-erythritol 2,4-cyclodiphosphate synthase">
    <location>
        <begin position="1"/>
        <end position="161"/>
    </location>
</feature>
<feature type="binding site" evidence="1">
    <location>
        <begin position="8"/>
        <end position="10"/>
    </location>
    <ligand>
        <name>4-CDP-2-C-methyl-D-erythritol 2-phosphate</name>
        <dbReference type="ChEBI" id="CHEBI:57919"/>
    </ligand>
</feature>
<feature type="binding site" evidence="1">
    <location>
        <position position="8"/>
    </location>
    <ligand>
        <name>a divalent metal cation</name>
        <dbReference type="ChEBI" id="CHEBI:60240"/>
    </ligand>
</feature>
<feature type="binding site" evidence="1">
    <location>
        <position position="10"/>
    </location>
    <ligand>
        <name>a divalent metal cation</name>
        <dbReference type="ChEBI" id="CHEBI:60240"/>
    </ligand>
</feature>
<feature type="binding site" evidence="1">
    <location>
        <begin position="34"/>
        <end position="35"/>
    </location>
    <ligand>
        <name>4-CDP-2-C-methyl-D-erythritol 2-phosphate</name>
        <dbReference type="ChEBI" id="CHEBI:57919"/>
    </ligand>
</feature>
<feature type="binding site" evidence="1">
    <location>
        <position position="42"/>
    </location>
    <ligand>
        <name>a divalent metal cation</name>
        <dbReference type="ChEBI" id="CHEBI:60240"/>
    </ligand>
</feature>
<feature type="binding site" evidence="1">
    <location>
        <begin position="56"/>
        <end position="58"/>
    </location>
    <ligand>
        <name>4-CDP-2-C-methyl-D-erythritol 2-phosphate</name>
        <dbReference type="ChEBI" id="CHEBI:57919"/>
    </ligand>
</feature>
<feature type="binding site" evidence="1">
    <location>
        <begin position="61"/>
        <end position="65"/>
    </location>
    <ligand>
        <name>4-CDP-2-C-methyl-D-erythritol 2-phosphate</name>
        <dbReference type="ChEBI" id="CHEBI:57919"/>
    </ligand>
</feature>
<feature type="binding site" evidence="1">
    <location>
        <begin position="100"/>
        <end position="106"/>
    </location>
    <ligand>
        <name>4-CDP-2-C-methyl-D-erythritol 2-phosphate</name>
        <dbReference type="ChEBI" id="CHEBI:57919"/>
    </ligand>
</feature>
<feature type="binding site" evidence="1">
    <location>
        <begin position="132"/>
        <end position="135"/>
    </location>
    <ligand>
        <name>4-CDP-2-C-methyl-D-erythritol 2-phosphate</name>
        <dbReference type="ChEBI" id="CHEBI:57919"/>
    </ligand>
</feature>
<feature type="binding site" evidence="1">
    <location>
        <position position="139"/>
    </location>
    <ligand>
        <name>4-CDP-2-C-methyl-D-erythritol 2-phosphate</name>
        <dbReference type="ChEBI" id="CHEBI:57919"/>
    </ligand>
</feature>
<feature type="site" description="Transition state stabilizer" evidence="1">
    <location>
        <position position="34"/>
    </location>
</feature>
<feature type="site" description="Transition state stabilizer" evidence="1">
    <location>
        <position position="133"/>
    </location>
</feature>
<proteinExistence type="inferred from homology"/>
<comment type="function">
    <text evidence="1">Involved in the biosynthesis of isopentenyl diphosphate (IPP) and dimethylallyl diphosphate (DMAPP), two major building blocks of isoprenoid compounds. Catalyzes the conversion of 4-diphosphocytidyl-2-C-methyl-D-erythritol 2-phosphate (CDP-ME2P) to 2-C-methyl-D-erythritol 2,4-cyclodiphosphate (ME-CPP) with a corresponding release of cytidine 5-monophosphate (CMP).</text>
</comment>
<comment type="catalytic activity">
    <reaction evidence="1">
        <text>4-CDP-2-C-methyl-D-erythritol 2-phosphate = 2-C-methyl-D-erythritol 2,4-cyclic diphosphate + CMP</text>
        <dbReference type="Rhea" id="RHEA:23864"/>
        <dbReference type="ChEBI" id="CHEBI:57919"/>
        <dbReference type="ChEBI" id="CHEBI:58483"/>
        <dbReference type="ChEBI" id="CHEBI:60377"/>
        <dbReference type="EC" id="4.6.1.12"/>
    </reaction>
</comment>
<comment type="cofactor">
    <cofactor evidence="1">
        <name>a divalent metal cation</name>
        <dbReference type="ChEBI" id="CHEBI:60240"/>
    </cofactor>
    <text evidence="1">Binds 1 divalent metal cation per subunit.</text>
</comment>
<comment type="pathway">
    <text evidence="1">Isoprenoid biosynthesis; isopentenyl diphosphate biosynthesis via DXP pathway; isopentenyl diphosphate from 1-deoxy-D-xylulose 5-phosphate: step 4/6.</text>
</comment>
<comment type="subunit">
    <text evidence="1">Homotrimer.</text>
</comment>
<comment type="similarity">
    <text evidence="1">Belongs to the IspF family.</text>
</comment>
<keyword id="KW-0414">Isoprene biosynthesis</keyword>
<keyword id="KW-0456">Lyase</keyword>
<keyword id="KW-0479">Metal-binding</keyword>
<keyword id="KW-1185">Reference proteome</keyword>
<evidence type="ECO:0000255" key="1">
    <source>
        <dbReference type="HAMAP-Rule" id="MF_00107"/>
    </source>
</evidence>
<sequence>MRIGLGYDVHKLTEDRKLIIGGVEIPHDKGLLGHSDADVLIHAIMDSILGALALGDIGKHFPDTDEEYKGADSMKLLEHVYNLITSKGYKIGNIDSTIIAQSPKMAPYIESMRSNISKVLNTDIDNINIKATTEEGLGFTGAKQGIASQSICLLLLTSQNN</sequence>
<organism>
    <name type="scientific">Clostridioides difficile (strain 630)</name>
    <name type="common">Peptoclostridium difficile</name>
    <dbReference type="NCBI Taxonomy" id="272563"/>
    <lineage>
        <taxon>Bacteria</taxon>
        <taxon>Bacillati</taxon>
        <taxon>Bacillota</taxon>
        <taxon>Clostridia</taxon>
        <taxon>Peptostreptococcales</taxon>
        <taxon>Peptostreptococcaceae</taxon>
        <taxon>Clostridioides</taxon>
    </lineage>
</organism>
<reference key="1">
    <citation type="journal article" date="2006" name="Nat. Genet.">
        <title>The multidrug-resistant human pathogen Clostridium difficile has a highly mobile, mosaic genome.</title>
        <authorList>
            <person name="Sebaihia M."/>
            <person name="Wren B.W."/>
            <person name="Mullany P."/>
            <person name="Fairweather N.F."/>
            <person name="Minton N."/>
            <person name="Stabler R."/>
            <person name="Thomson N.R."/>
            <person name="Roberts A.P."/>
            <person name="Cerdeno-Tarraga A.M."/>
            <person name="Wang H."/>
            <person name="Holden M.T.G."/>
            <person name="Wright A."/>
            <person name="Churcher C."/>
            <person name="Quail M.A."/>
            <person name="Baker S."/>
            <person name="Bason N."/>
            <person name="Brooks K."/>
            <person name="Chillingworth T."/>
            <person name="Cronin A."/>
            <person name="Davis P."/>
            <person name="Dowd L."/>
            <person name="Fraser A."/>
            <person name="Feltwell T."/>
            <person name="Hance Z."/>
            <person name="Holroyd S."/>
            <person name="Jagels K."/>
            <person name="Moule S."/>
            <person name="Mungall K."/>
            <person name="Price C."/>
            <person name="Rabbinowitsch E."/>
            <person name="Sharp S."/>
            <person name="Simmonds M."/>
            <person name="Stevens K."/>
            <person name="Unwin L."/>
            <person name="Whithead S."/>
            <person name="Dupuy B."/>
            <person name="Dougan G."/>
            <person name="Barrell B."/>
            <person name="Parkhill J."/>
        </authorList>
    </citation>
    <scope>NUCLEOTIDE SEQUENCE [LARGE SCALE GENOMIC DNA]</scope>
    <source>
        <strain>630</strain>
    </source>
</reference>
<accession>Q18CD3</accession>